<organismHost>
    <name type="scientific">Ornithodoros</name>
    <name type="common">relapsing fever ticks</name>
    <dbReference type="NCBI Taxonomy" id="6937"/>
</organismHost>
<organismHost>
    <name type="scientific">Phacochoerus aethiopicus</name>
    <name type="common">Warthog</name>
    <dbReference type="NCBI Taxonomy" id="85517"/>
</organismHost>
<organismHost>
    <name type="scientific">Phacochoerus africanus</name>
    <name type="common">Warthog</name>
    <dbReference type="NCBI Taxonomy" id="41426"/>
</organismHost>
<organismHost>
    <name type="scientific">Potamochoerus larvatus</name>
    <name type="common">Bushpig</name>
    <dbReference type="NCBI Taxonomy" id="273792"/>
</organismHost>
<organismHost>
    <name type="scientific">Sus scrofa</name>
    <name type="common">Pig</name>
    <dbReference type="NCBI Taxonomy" id="9823"/>
</organismHost>
<evidence type="ECO:0000250" key="1">
    <source>
        <dbReference type="UniProtKB" id="Q65165"/>
    </source>
</evidence>
<evidence type="ECO:0000256" key="2">
    <source>
        <dbReference type="SAM" id="MobiDB-lite"/>
    </source>
</evidence>
<evidence type="ECO:0000305" key="3"/>
<feature type="chain" id="PRO_0000373413" description="Minor capsid protein p49">
    <location>
        <begin position="1"/>
        <end position="438"/>
    </location>
</feature>
<feature type="region of interest" description="Disordered" evidence="2">
    <location>
        <begin position="134"/>
        <end position="167"/>
    </location>
</feature>
<feature type="compositionally biased region" description="Polar residues" evidence="2">
    <location>
        <begin position="144"/>
        <end position="167"/>
    </location>
</feature>
<dbReference type="EMBL" id="AY261363">
    <property type="status" value="NOT_ANNOTATED_CDS"/>
    <property type="molecule type" value="Genomic_DNA"/>
</dbReference>
<dbReference type="Proteomes" id="UP000000859">
    <property type="component" value="Segment"/>
</dbReference>
<dbReference type="GO" id="GO:0044423">
    <property type="term" value="C:virion component"/>
    <property type="evidence" value="ECO:0007669"/>
    <property type="project" value="UniProtKB-KW"/>
</dbReference>
<name>P49_ASFP4</name>
<organism>
    <name type="scientific">African swine fever virus (isolate Tick/South Africa/Pretoriuskop Pr4/1996)</name>
    <name type="common">ASFV</name>
    <dbReference type="NCBI Taxonomy" id="561443"/>
    <lineage>
        <taxon>Viruses</taxon>
        <taxon>Varidnaviria</taxon>
        <taxon>Bamfordvirae</taxon>
        <taxon>Nucleocytoviricota</taxon>
        <taxon>Pokkesviricetes</taxon>
        <taxon>Asfuvirales</taxon>
        <taxon>Asfarviridae</taxon>
        <taxon>Asfivirus</taxon>
        <taxon>African swine fever virus</taxon>
    </lineage>
</organism>
<keyword id="KW-0426">Late protein</keyword>
<keyword id="KW-0946">Virion</keyword>
<protein>
    <recommendedName>
        <fullName evidence="1">Minor capsid protein p49</fullName>
        <shortName>p49</shortName>
    </recommendedName>
</protein>
<sequence length="438" mass="49330">MYHDYASKLLADYRSDPPLWESDLPRHNRYSDNILNSRYCGNKNGAAPVYNEYTNSPGQAEKGLQLSDLRNFSFMLNPQHKNIGYGDAQDLEPYSSIPKNKLFNHFKNYRPAFSTHTENLIKRNVVRTEKKTFPQVSGLKDTQKNCLTQPSSLPSLKNPKNSSVPSTRFSEHTKFFSYEDLPKLRTKGTIKHEQHLGDQMPGQCYNGYIPHQDVYNILCLAHKLPASVEKEIAGRGIPLGNPHVKPNIEQELIKSTSTYTGVPILGPLPPKDSQHGREHQEFSANRHMLQVSNILHSVFANHSIKPQILEDIPVLNAQLASIKPVSPFLNKAYQTHYMENIVTLVPRFKSIANYSSPIPNYSKRNNGQAEYFDTSKQTISRHNNYIPKYTGGIGDSKLDSTFPKDFNASSVPLTSAEKDHSLRGDNSACCISSISPSL</sequence>
<accession>P0C9Z7</accession>
<gene>
    <name type="ordered locus">Pret-087</name>
</gene>
<reference key="1">
    <citation type="submission" date="2003-03" db="EMBL/GenBank/DDBJ databases">
        <title>African swine fever virus genomes.</title>
        <authorList>
            <person name="Kutish G.F."/>
            <person name="Rock D.L."/>
        </authorList>
    </citation>
    <scope>NUCLEOTIDE SEQUENCE [LARGE SCALE GENOMIC DNA]</scope>
</reference>
<comment type="function">
    <text evidence="1">Together with the penton and the other minor capsid proteins (M1249L, p17), forms a complicated network immediately below the outer capsid shell, stabilizing the whole capsid (By similarity). Plays an essential role in the formation of infectious virus particles. Especially required for the formation of the capsid vertices (By similarity). During virion assembly, associates with the membrane and probably mediates the docking of the penton complex to the inner membrane, where it recruits the capsomers to form the penton core (By similarity).</text>
</comment>
<comment type="subcellular location">
    <subcellularLocation>
        <location evidence="1">Virion</location>
    </subcellularLocation>
    <text evidence="1">Localizes in close proximity to the capsid vertices.</text>
</comment>
<comment type="induction">
    <text evidence="3">Expressed in the late phase of the viral replicative cycle.</text>
</comment>
<comment type="similarity">
    <text evidence="3">Belongs to the asfivirus p49 structural protein family.</text>
</comment>
<proteinExistence type="inferred from homology"/>